<protein>
    <recommendedName>
        <fullName evidence="1">Malate dehydrogenase</fullName>
        <ecNumber evidence="1">1.1.1.37</ecNumber>
    </recommendedName>
</protein>
<comment type="function">
    <text evidence="1">Catalyzes the reversible oxidation of malate to oxaloacetate.</text>
</comment>
<comment type="catalytic activity">
    <reaction evidence="1">
        <text>(S)-malate + NAD(+) = oxaloacetate + NADH + H(+)</text>
        <dbReference type="Rhea" id="RHEA:21432"/>
        <dbReference type="ChEBI" id="CHEBI:15378"/>
        <dbReference type="ChEBI" id="CHEBI:15589"/>
        <dbReference type="ChEBI" id="CHEBI:16452"/>
        <dbReference type="ChEBI" id="CHEBI:57540"/>
        <dbReference type="ChEBI" id="CHEBI:57945"/>
        <dbReference type="EC" id="1.1.1.37"/>
    </reaction>
</comment>
<comment type="subunit">
    <text evidence="1">Homodimer.</text>
</comment>
<comment type="similarity">
    <text evidence="1">Belongs to the LDH/MDH superfamily. MDH type 1 family.</text>
</comment>
<gene>
    <name evidence="1" type="primary">mdh</name>
    <name type="ordered locus">Sden_0826</name>
</gene>
<proteinExistence type="inferred from homology"/>
<feature type="chain" id="PRO_0000294301" description="Malate dehydrogenase">
    <location>
        <begin position="1"/>
        <end position="311"/>
    </location>
</feature>
<feature type="active site" description="Proton acceptor" evidence="1">
    <location>
        <position position="177"/>
    </location>
</feature>
<feature type="binding site" evidence="1">
    <location>
        <begin position="7"/>
        <end position="13"/>
    </location>
    <ligand>
        <name>NAD(+)</name>
        <dbReference type="ChEBI" id="CHEBI:57540"/>
    </ligand>
</feature>
<feature type="binding site" evidence="1">
    <location>
        <position position="34"/>
    </location>
    <ligand>
        <name>NAD(+)</name>
        <dbReference type="ChEBI" id="CHEBI:57540"/>
    </ligand>
</feature>
<feature type="binding site" evidence="1">
    <location>
        <position position="81"/>
    </location>
    <ligand>
        <name>substrate</name>
    </ligand>
</feature>
<feature type="binding site" evidence="1">
    <location>
        <position position="87"/>
    </location>
    <ligand>
        <name>substrate</name>
    </ligand>
</feature>
<feature type="binding site" evidence="1">
    <location>
        <position position="94"/>
    </location>
    <ligand>
        <name>NAD(+)</name>
        <dbReference type="ChEBI" id="CHEBI:57540"/>
    </ligand>
</feature>
<feature type="binding site" evidence="1">
    <location>
        <begin position="117"/>
        <end position="119"/>
    </location>
    <ligand>
        <name>NAD(+)</name>
        <dbReference type="ChEBI" id="CHEBI:57540"/>
    </ligand>
</feature>
<feature type="binding site" evidence="1">
    <location>
        <position position="119"/>
    </location>
    <ligand>
        <name>substrate</name>
    </ligand>
</feature>
<feature type="binding site" evidence="1">
    <location>
        <position position="153"/>
    </location>
    <ligand>
        <name>substrate</name>
    </ligand>
</feature>
<feature type="binding site" evidence="1">
    <location>
        <position position="227"/>
    </location>
    <ligand>
        <name>NAD(+)</name>
        <dbReference type="ChEBI" id="CHEBI:57540"/>
    </ligand>
</feature>
<name>MDH_SHEDO</name>
<sequence>MKVAVLGAAGGIGQALALLLKTQLPAGSKLSLYDIAPVTPGVAVDLSHIPTAVEIKGFAGEDPTPALVDADVVLISAGVARKPGMDRSDLFNINAGIVRNLMEKVAATCPKALVGIITNPVNTTVAIAAEVMKKAGVYDKNRLFGVTTLDVIRSETFIAELKGLNVADVNINVIGGHSGVTILPLLSQVKGVSFTDEEVAALTKRIQNAGTEVVEAKAGGGSATLSMGQAACRFGLSLVRGLQGEANVVECAYVDGGSEHAQFFAQPILLGKNGVEKVMPYGEVSAFEANARDAMLDTLNADIKLGVEFVK</sequence>
<accession>Q12R11</accession>
<organism>
    <name type="scientific">Shewanella denitrificans (strain OS217 / ATCC BAA-1090 / DSM 15013)</name>
    <dbReference type="NCBI Taxonomy" id="318161"/>
    <lineage>
        <taxon>Bacteria</taxon>
        <taxon>Pseudomonadati</taxon>
        <taxon>Pseudomonadota</taxon>
        <taxon>Gammaproteobacteria</taxon>
        <taxon>Alteromonadales</taxon>
        <taxon>Shewanellaceae</taxon>
        <taxon>Shewanella</taxon>
    </lineage>
</organism>
<dbReference type="EC" id="1.1.1.37" evidence="1"/>
<dbReference type="EMBL" id="CP000302">
    <property type="protein sequence ID" value="ABE54115.1"/>
    <property type="molecule type" value="Genomic_DNA"/>
</dbReference>
<dbReference type="RefSeq" id="WP_011495280.1">
    <property type="nucleotide sequence ID" value="NC_007954.1"/>
</dbReference>
<dbReference type="SMR" id="Q12R11"/>
<dbReference type="STRING" id="318161.Sden_0826"/>
<dbReference type="KEGG" id="sdn:Sden_0826"/>
<dbReference type="eggNOG" id="COG0039">
    <property type="taxonomic scope" value="Bacteria"/>
</dbReference>
<dbReference type="HOGENOM" id="CLU_047181_0_1_6"/>
<dbReference type="OrthoDB" id="9802969at2"/>
<dbReference type="Proteomes" id="UP000001982">
    <property type="component" value="Chromosome"/>
</dbReference>
<dbReference type="GO" id="GO:0005737">
    <property type="term" value="C:cytoplasm"/>
    <property type="evidence" value="ECO:0007669"/>
    <property type="project" value="TreeGrafter"/>
</dbReference>
<dbReference type="GO" id="GO:0030060">
    <property type="term" value="F:L-malate dehydrogenase (NAD+) activity"/>
    <property type="evidence" value="ECO:0007669"/>
    <property type="project" value="UniProtKB-UniRule"/>
</dbReference>
<dbReference type="GO" id="GO:0006108">
    <property type="term" value="P:malate metabolic process"/>
    <property type="evidence" value="ECO:0007669"/>
    <property type="project" value="InterPro"/>
</dbReference>
<dbReference type="GO" id="GO:0006099">
    <property type="term" value="P:tricarboxylic acid cycle"/>
    <property type="evidence" value="ECO:0007669"/>
    <property type="project" value="UniProtKB-UniRule"/>
</dbReference>
<dbReference type="CDD" id="cd01337">
    <property type="entry name" value="MDH_glyoxysomal_mitochondrial"/>
    <property type="match status" value="1"/>
</dbReference>
<dbReference type="FunFam" id="3.40.50.720:FF:000017">
    <property type="entry name" value="Malate dehydrogenase"/>
    <property type="match status" value="1"/>
</dbReference>
<dbReference type="FunFam" id="3.90.110.10:FF:000001">
    <property type="entry name" value="Malate dehydrogenase"/>
    <property type="match status" value="1"/>
</dbReference>
<dbReference type="Gene3D" id="3.90.110.10">
    <property type="entry name" value="Lactate dehydrogenase/glycoside hydrolase, family 4, C-terminal"/>
    <property type="match status" value="1"/>
</dbReference>
<dbReference type="Gene3D" id="3.40.50.720">
    <property type="entry name" value="NAD(P)-binding Rossmann-like Domain"/>
    <property type="match status" value="1"/>
</dbReference>
<dbReference type="HAMAP" id="MF_01516">
    <property type="entry name" value="Malate_dehydrog_1"/>
    <property type="match status" value="1"/>
</dbReference>
<dbReference type="InterPro" id="IPR001557">
    <property type="entry name" value="L-lactate/malate_DH"/>
</dbReference>
<dbReference type="InterPro" id="IPR022383">
    <property type="entry name" value="Lactate/malate_DH_C"/>
</dbReference>
<dbReference type="InterPro" id="IPR001236">
    <property type="entry name" value="Lactate/malate_DH_N"/>
</dbReference>
<dbReference type="InterPro" id="IPR015955">
    <property type="entry name" value="Lactate_DH/Glyco_Ohase_4_C"/>
</dbReference>
<dbReference type="InterPro" id="IPR001252">
    <property type="entry name" value="Malate_DH_AS"/>
</dbReference>
<dbReference type="InterPro" id="IPR010097">
    <property type="entry name" value="Malate_DH_type1"/>
</dbReference>
<dbReference type="InterPro" id="IPR023958">
    <property type="entry name" value="Malate_DH_type1_bac"/>
</dbReference>
<dbReference type="InterPro" id="IPR036291">
    <property type="entry name" value="NAD(P)-bd_dom_sf"/>
</dbReference>
<dbReference type="NCBIfam" id="TIGR01772">
    <property type="entry name" value="MDH_euk_gproteo"/>
    <property type="match status" value="1"/>
</dbReference>
<dbReference type="PANTHER" id="PTHR11540">
    <property type="entry name" value="MALATE AND LACTATE DEHYDROGENASE"/>
    <property type="match status" value="1"/>
</dbReference>
<dbReference type="PANTHER" id="PTHR11540:SF16">
    <property type="entry name" value="MALATE DEHYDROGENASE, MITOCHONDRIAL"/>
    <property type="match status" value="1"/>
</dbReference>
<dbReference type="Pfam" id="PF02866">
    <property type="entry name" value="Ldh_1_C"/>
    <property type="match status" value="1"/>
</dbReference>
<dbReference type="Pfam" id="PF00056">
    <property type="entry name" value="Ldh_1_N"/>
    <property type="match status" value="1"/>
</dbReference>
<dbReference type="PIRSF" id="PIRSF000102">
    <property type="entry name" value="Lac_mal_DH"/>
    <property type="match status" value="1"/>
</dbReference>
<dbReference type="SUPFAM" id="SSF56327">
    <property type="entry name" value="LDH C-terminal domain-like"/>
    <property type="match status" value="1"/>
</dbReference>
<dbReference type="SUPFAM" id="SSF51735">
    <property type="entry name" value="NAD(P)-binding Rossmann-fold domains"/>
    <property type="match status" value="1"/>
</dbReference>
<dbReference type="PROSITE" id="PS00068">
    <property type="entry name" value="MDH"/>
    <property type="match status" value="1"/>
</dbReference>
<keyword id="KW-0520">NAD</keyword>
<keyword id="KW-0560">Oxidoreductase</keyword>
<keyword id="KW-1185">Reference proteome</keyword>
<keyword id="KW-0816">Tricarboxylic acid cycle</keyword>
<evidence type="ECO:0000255" key="1">
    <source>
        <dbReference type="HAMAP-Rule" id="MF_01516"/>
    </source>
</evidence>
<reference key="1">
    <citation type="submission" date="2006-03" db="EMBL/GenBank/DDBJ databases">
        <title>Complete sequence of Shewanella denitrificans OS217.</title>
        <authorList>
            <consortium name="US DOE Joint Genome Institute"/>
            <person name="Copeland A."/>
            <person name="Lucas S."/>
            <person name="Lapidus A."/>
            <person name="Barry K."/>
            <person name="Detter J.C."/>
            <person name="Glavina del Rio T."/>
            <person name="Hammon N."/>
            <person name="Israni S."/>
            <person name="Dalin E."/>
            <person name="Tice H."/>
            <person name="Pitluck S."/>
            <person name="Brettin T."/>
            <person name="Bruce D."/>
            <person name="Han C."/>
            <person name="Tapia R."/>
            <person name="Gilna P."/>
            <person name="Kiss H."/>
            <person name="Schmutz J."/>
            <person name="Larimer F."/>
            <person name="Land M."/>
            <person name="Hauser L."/>
            <person name="Kyrpides N."/>
            <person name="Lykidis A."/>
            <person name="Richardson P."/>
        </authorList>
    </citation>
    <scope>NUCLEOTIDE SEQUENCE [LARGE SCALE GENOMIC DNA]</scope>
    <source>
        <strain>OS217 / ATCC BAA-1090 / DSM 15013</strain>
    </source>
</reference>